<sequence length="272" mass="30921">MKLLKNVLLGLFFSMSISGFSEVKVSDTFVKQDTVVEPKIRVLLSNESTTALIEAKGPYRIYGDNVLLDTAIQGQRCVVHALYEGIRWGEFYPGLQCLKIEPVDDTASLFFNGIQYQGSLYVHRKDNHCIMVSNEVTIEDYLKSVLSIKYLEELDKEALSACIILERTALYEKLLARNPQNFWHVKAEEEGYAGFGVTKQFYGVEEAIDWTARLVVDSPQGLIIDAQGLLQSNVDRLAIEGFNARQILEKFYKDVDFVVIESWNEELDGEIR</sequence>
<name>Y389_CHLPN</name>
<dbReference type="EMBL" id="AE001363">
    <property type="protein sequence ID" value="AAD18541.1"/>
    <property type="molecule type" value="Genomic_DNA"/>
</dbReference>
<dbReference type="EMBL" id="AE002161">
    <property type="protein sequence ID" value="AAF38215.1"/>
    <property type="molecule type" value="Genomic_DNA"/>
</dbReference>
<dbReference type="EMBL" id="BA000008">
    <property type="protein sequence ID" value="BAA98597.1"/>
    <property type="molecule type" value="Genomic_DNA"/>
</dbReference>
<dbReference type="EMBL" id="AE009440">
    <property type="protein sequence ID" value="AAP98332.1"/>
    <property type="molecule type" value="Genomic_DNA"/>
</dbReference>
<dbReference type="PIR" id="C72084">
    <property type="entry name" value="C72084"/>
</dbReference>
<dbReference type="PIR" id="C86539">
    <property type="entry name" value="C86539"/>
</dbReference>
<dbReference type="RefSeq" id="NP_224589.1">
    <property type="nucleotide sequence ID" value="NC_000922.1"/>
</dbReference>
<dbReference type="STRING" id="406984.CPK_ORF00898"/>
<dbReference type="KEGG" id="cpa:CP_0366"/>
<dbReference type="KEGG" id="cpj:CPj0389"/>
<dbReference type="KEGG" id="cpn:CPn_0389"/>
<dbReference type="KEGG" id="cpt:CpB0400"/>
<dbReference type="PATRIC" id="fig|115713.3.peg.431"/>
<dbReference type="eggNOG" id="COG2385">
    <property type="taxonomic scope" value="Bacteria"/>
</dbReference>
<dbReference type="HOGENOM" id="CLU_089575_0_0_0"/>
<dbReference type="OrthoDB" id="20877at2"/>
<dbReference type="Proteomes" id="UP000000583">
    <property type="component" value="Chromosome"/>
</dbReference>
<dbReference type="Proteomes" id="UP000000801">
    <property type="component" value="Chromosome"/>
</dbReference>
<dbReference type="InterPro" id="IPR013693">
    <property type="entry name" value="SpoIID/LytB_N"/>
</dbReference>
<dbReference type="Pfam" id="PF08486">
    <property type="entry name" value="SpoIID"/>
    <property type="match status" value="1"/>
</dbReference>
<evidence type="ECO:0000305" key="1"/>
<comment type="similarity">
    <text evidence="1">Belongs to the chlamydial CPn_0389/CT_041/TC_0311 family.</text>
</comment>
<protein>
    <recommendedName>
        <fullName>Uncharacterized protein CPn_0389/CP_0366/CPj0389/CpB0400</fullName>
    </recommendedName>
</protein>
<proteinExistence type="inferred from homology"/>
<organism>
    <name type="scientific">Chlamydia pneumoniae</name>
    <name type="common">Chlamydophila pneumoniae</name>
    <dbReference type="NCBI Taxonomy" id="83558"/>
    <lineage>
        <taxon>Bacteria</taxon>
        <taxon>Pseudomonadati</taxon>
        <taxon>Chlamydiota</taxon>
        <taxon>Chlamydiia</taxon>
        <taxon>Chlamydiales</taxon>
        <taxon>Chlamydiaceae</taxon>
        <taxon>Chlamydia/Chlamydophila group</taxon>
        <taxon>Chlamydia</taxon>
    </lineage>
</organism>
<accession>Q9Z8F4</accession>
<accession>Q9JQJ0</accession>
<feature type="chain" id="PRO_0000218373" description="Uncharacterized protein CPn_0389/CP_0366/CPj0389/CpB0400">
    <location>
        <begin position="1"/>
        <end position="272"/>
    </location>
</feature>
<reference key="1">
    <citation type="journal article" date="1999" name="Nat. Genet.">
        <title>Comparative genomes of Chlamydia pneumoniae and C. trachomatis.</title>
        <authorList>
            <person name="Kalman S."/>
            <person name="Mitchell W.P."/>
            <person name="Marathe R."/>
            <person name="Lammel C.J."/>
            <person name="Fan J."/>
            <person name="Hyman R.W."/>
            <person name="Olinger L."/>
            <person name="Grimwood J."/>
            <person name="Davis R.W."/>
            <person name="Stephens R.S."/>
        </authorList>
    </citation>
    <scope>NUCLEOTIDE SEQUENCE [LARGE SCALE GENOMIC DNA]</scope>
    <source>
        <strain>CWL029</strain>
    </source>
</reference>
<reference key="2">
    <citation type="journal article" date="2000" name="Nucleic Acids Res.">
        <title>Genome sequences of Chlamydia trachomatis MoPn and Chlamydia pneumoniae AR39.</title>
        <authorList>
            <person name="Read T.D."/>
            <person name="Brunham R.C."/>
            <person name="Shen C."/>
            <person name="Gill S.R."/>
            <person name="Heidelberg J.F."/>
            <person name="White O."/>
            <person name="Hickey E.K."/>
            <person name="Peterson J.D."/>
            <person name="Utterback T.R."/>
            <person name="Berry K.J."/>
            <person name="Bass S."/>
            <person name="Linher K.D."/>
            <person name="Weidman J.F."/>
            <person name="Khouri H.M."/>
            <person name="Craven B."/>
            <person name="Bowman C."/>
            <person name="Dodson R.J."/>
            <person name="Gwinn M.L."/>
            <person name="Nelson W.C."/>
            <person name="DeBoy R.T."/>
            <person name="Kolonay J.F."/>
            <person name="McClarty G."/>
            <person name="Salzberg S.L."/>
            <person name="Eisen J.A."/>
            <person name="Fraser C.M."/>
        </authorList>
    </citation>
    <scope>NUCLEOTIDE SEQUENCE [LARGE SCALE GENOMIC DNA]</scope>
    <source>
        <strain>AR39</strain>
    </source>
</reference>
<reference key="3">
    <citation type="journal article" date="2000" name="Nucleic Acids Res.">
        <title>Comparison of whole genome sequences of Chlamydia pneumoniae J138 from Japan and CWL029 from USA.</title>
        <authorList>
            <person name="Shirai M."/>
            <person name="Hirakawa H."/>
            <person name="Kimoto M."/>
            <person name="Tabuchi M."/>
            <person name="Kishi F."/>
            <person name="Ouchi K."/>
            <person name="Shiba T."/>
            <person name="Ishii K."/>
            <person name="Hattori M."/>
            <person name="Kuhara S."/>
            <person name="Nakazawa T."/>
        </authorList>
    </citation>
    <scope>NUCLEOTIDE SEQUENCE [LARGE SCALE GENOMIC DNA]</scope>
    <source>
        <strain>J138</strain>
    </source>
</reference>
<reference key="4">
    <citation type="submission" date="2002-05" db="EMBL/GenBank/DDBJ databases">
        <title>The genome sequence of Chlamydia pneumoniae TW183 and comparison with other Chlamydia strains based on whole genome sequence analysis.</title>
        <authorList>
            <person name="Geng M.M."/>
            <person name="Schuhmacher A."/>
            <person name="Muehldorfer I."/>
            <person name="Bensch K.W."/>
            <person name="Schaefer K.P."/>
            <person name="Schneider S."/>
            <person name="Pohl T."/>
            <person name="Essig A."/>
            <person name="Marre R."/>
            <person name="Melchers K."/>
        </authorList>
    </citation>
    <scope>NUCLEOTIDE SEQUENCE [LARGE SCALE GENOMIC DNA]</scope>
    <source>
        <strain>TW-183</strain>
    </source>
</reference>
<gene>
    <name type="ordered locus">CPn_0389</name>
    <name type="ordered locus">CP_0366</name>
    <name type="ordered locus">CPj0389</name>
    <name type="ordered locus">CpB0400</name>
</gene>